<evidence type="ECO:0000255" key="1">
    <source>
        <dbReference type="HAMAP-Rule" id="MF_00203"/>
    </source>
</evidence>
<accession>Q3IYX6</accession>
<comment type="function">
    <text evidence="1">The UvrABC repair system catalyzes the recognition and processing of DNA lesions. UvrC both incises the 5' and 3' sides of the lesion. The N-terminal half is responsible for the 3' incision and the C-terminal half is responsible for the 5' incision.</text>
</comment>
<comment type="subunit">
    <text evidence="1">Interacts with UvrB in an incision complex.</text>
</comment>
<comment type="subcellular location">
    <subcellularLocation>
        <location evidence="1">Cytoplasm</location>
    </subcellularLocation>
</comment>
<comment type="similarity">
    <text evidence="1">Belongs to the UvrC family.</text>
</comment>
<organism>
    <name type="scientific">Cereibacter sphaeroides (strain ATCC 17023 / DSM 158 / JCM 6121 / CCUG 31486 / LMG 2827 / NBRC 12203 / NCIMB 8253 / ATH 2.4.1.)</name>
    <name type="common">Rhodobacter sphaeroides</name>
    <dbReference type="NCBI Taxonomy" id="272943"/>
    <lineage>
        <taxon>Bacteria</taxon>
        <taxon>Pseudomonadati</taxon>
        <taxon>Pseudomonadota</taxon>
        <taxon>Alphaproteobacteria</taxon>
        <taxon>Rhodobacterales</taxon>
        <taxon>Paracoccaceae</taxon>
        <taxon>Cereibacter</taxon>
    </lineage>
</organism>
<feature type="chain" id="PRO_0000227468" description="UvrABC system protein C">
    <location>
        <begin position="1"/>
        <end position="623"/>
    </location>
</feature>
<feature type="domain" description="GIY-YIG" evidence="1">
    <location>
        <begin position="27"/>
        <end position="105"/>
    </location>
</feature>
<feature type="domain" description="UVR" evidence="1">
    <location>
        <begin position="215"/>
        <end position="250"/>
    </location>
</feature>
<sequence>MQDNETDGRDVPTGHAVIQGYLKTLDGSPGVYRMLDAQSQVLYVGKARNLRARVSNYARPSGHSGRIARMIRETASMMFLTTRTETEALLLEQNLIKQLKPRYNVLLRDDKSFPNILIAKDHPFPMLKKHRGKKSEKGSYFGPFASAGAVNRTLNQLQRVFLLRTCSDATFESRTRPCLLFQIKRCSAPCVGRVPAEDYAELIGDAERFLQGRTTKVQANLAEQMQAASEAMEFERAAALRDRIKALTQVQSSQGINPRGVAEADVIAVHLEGGQACVQVFFIRANQSWGNRDFFPRTGAGAEEPEILEAFLAQFYDDKEPPRMILLSHPVDNPDLVGQLLSERAGRKVTLGVPQRGEKAELVENAARNARESLARRMAESATQNRLLAGLAEAFELDAAPKRIEVYDNSHIQGTNAVGGMIVAGPEGFLKSQYRKFNIRGAAGAQGDDFGMMKEVLTRRFERLLKEDPERKTDAWPDLLLIDGGAGQVSAVQEILQELGVDDVPFIGVAKGIDRDAGKEEFHRPGEPPFALRMNDPVLYFVQRLRDEAHRWAIGAHRAKRAKAVSATPLDEIPGVGAARKRALLAHFGSAKAVARAGVPDLCAVEGISETMAQSIHDYFHGS</sequence>
<keyword id="KW-0963">Cytoplasm</keyword>
<keyword id="KW-0227">DNA damage</keyword>
<keyword id="KW-0228">DNA excision</keyword>
<keyword id="KW-0234">DNA repair</keyword>
<keyword id="KW-0267">Excision nuclease</keyword>
<keyword id="KW-1185">Reference proteome</keyword>
<keyword id="KW-0742">SOS response</keyword>
<proteinExistence type="inferred from homology"/>
<name>UVRC_CERS4</name>
<reference key="1">
    <citation type="submission" date="2005-09" db="EMBL/GenBank/DDBJ databases">
        <title>Complete sequence of chromosome 1 of Rhodobacter sphaeroides 2.4.1.</title>
        <authorList>
            <person name="Copeland A."/>
            <person name="Lucas S."/>
            <person name="Lapidus A."/>
            <person name="Barry K."/>
            <person name="Detter J.C."/>
            <person name="Glavina T."/>
            <person name="Hammon N."/>
            <person name="Israni S."/>
            <person name="Pitluck S."/>
            <person name="Richardson P."/>
            <person name="Mackenzie C."/>
            <person name="Choudhary M."/>
            <person name="Larimer F."/>
            <person name="Hauser L.J."/>
            <person name="Land M."/>
            <person name="Donohue T.J."/>
            <person name="Kaplan S."/>
        </authorList>
    </citation>
    <scope>NUCLEOTIDE SEQUENCE [LARGE SCALE GENOMIC DNA]</scope>
    <source>
        <strain>ATCC 17023 / DSM 158 / JCM 6121 / CCUG 31486 / LMG 2827 / NBRC 12203 / NCIMB 8253 / ATH 2.4.1.</strain>
    </source>
</reference>
<protein>
    <recommendedName>
        <fullName evidence="1">UvrABC system protein C</fullName>
        <shortName evidence="1">Protein UvrC</shortName>
    </recommendedName>
    <alternativeName>
        <fullName evidence="1">Excinuclease ABC subunit C</fullName>
    </alternativeName>
</protein>
<dbReference type="EMBL" id="CP000143">
    <property type="protein sequence ID" value="ABA80258.1"/>
    <property type="molecule type" value="Genomic_DNA"/>
</dbReference>
<dbReference type="RefSeq" id="WP_011338696.1">
    <property type="nucleotide sequence ID" value="NZ_CP030271.1"/>
</dbReference>
<dbReference type="RefSeq" id="YP_354159.1">
    <property type="nucleotide sequence ID" value="NC_007493.2"/>
</dbReference>
<dbReference type="SMR" id="Q3IYX6"/>
<dbReference type="STRING" id="272943.RSP_1074"/>
<dbReference type="EnsemblBacteria" id="ABA80258">
    <property type="protein sequence ID" value="ABA80258"/>
    <property type="gene ID" value="RSP_1074"/>
</dbReference>
<dbReference type="GeneID" id="67447848"/>
<dbReference type="KEGG" id="rsp:RSP_1074"/>
<dbReference type="PATRIC" id="fig|272943.9.peg.3048"/>
<dbReference type="eggNOG" id="COG0322">
    <property type="taxonomic scope" value="Bacteria"/>
</dbReference>
<dbReference type="OrthoDB" id="9804933at2"/>
<dbReference type="PhylomeDB" id="Q3IYX6"/>
<dbReference type="Proteomes" id="UP000002703">
    <property type="component" value="Chromosome 1"/>
</dbReference>
<dbReference type="GO" id="GO:0005737">
    <property type="term" value="C:cytoplasm"/>
    <property type="evidence" value="ECO:0007669"/>
    <property type="project" value="UniProtKB-SubCell"/>
</dbReference>
<dbReference type="GO" id="GO:0009380">
    <property type="term" value="C:excinuclease repair complex"/>
    <property type="evidence" value="ECO:0007669"/>
    <property type="project" value="InterPro"/>
</dbReference>
<dbReference type="GO" id="GO:0003677">
    <property type="term" value="F:DNA binding"/>
    <property type="evidence" value="ECO:0007669"/>
    <property type="project" value="UniProtKB-UniRule"/>
</dbReference>
<dbReference type="GO" id="GO:0009381">
    <property type="term" value="F:excinuclease ABC activity"/>
    <property type="evidence" value="ECO:0007669"/>
    <property type="project" value="UniProtKB-UniRule"/>
</dbReference>
<dbReference type="GO" id="GO:0006289">
    <property type="term" value="P:nucleotide-excision repair"/>
    <property type="evidence" value="ECO:0007669"/>
    <property type="project" value="UniProtKB-UniRule"/>
</dbReference>
<dbReference type="GO" id="GO:0009432">
    <property type="term" value="P:SOS response"/>
    <property type="evidence" value="ECO:0007669"/>
    <property type="project" value="UniProtKB-UniRule"/>
</dbReference>
<dbReference type="CDD" id="cd10434">
    <property type="entry name" value="GIY-YIG_UvrC_Cho"/>
    <property type="match status" value="1"/>
</dbReference>
<dbReference type="FunFam" id="3.30.420.340:FF:000001">
    <property type="entry name" value="UvrABC system protein C"/>
    <property type="match status" value="1"/>
</dbReference>
<dbReference type="FunFam" id="3.40.1440.10:FF:000001">
    <property type="entry name" value="UvrABC system protein C"/>
    <property type="match status" value="1"/>
</dbReference>
<dbReference type="Gene3D" id="1.10.150.20">
    <property type="entry name" value="5' to 3' exonuclease, C-terminal subdomain"/>
    <property type="match status" value="1"/>
</dbReference>
<dbReference type="Gene3D" id="3.40.1440.10">
    <property type="entry name" value="GIY-YIG endonuclease"/>
    <property type="match status" value="1"/>
</dbReference>
<dbReference type="Gene3D" id="4.10.860.10">
    <property type="entry name" value="UVR domain"/>
    <property type="match status" value="1"/>
</dbReference>
<dbReference type="Gene3D" id="3.30.420.340">
    <property type="entry name" value="UvrC, RNAse H endonuclease domain"/>
    <property type="match status" value="1"/>
</dbReference>
<dbReference type="HAMAP" id="MF_00203">
    <property type="entry name" value="UvrC"/>
    <property type="match status" value="1"/>
</dbReference>
<dbReference type="InterPro" id="IPR041663">
    <property type="entry name" value="DisA/LigA_HHH"/>
</dbReference>
<dbReference type="InterPro" id="IPR000305">
    <property type="entry name" value="GIY-YIG_endonuc"/>
</dbReference>
<dbReference type="InterPro" id="IPR035901">
    <property type="entry name" value="GIY-YIG_endonuc_sf"/>
</dbReference>
<dbReference type="InterPro" id="IPR047296">
    <property type="entry name" value="GIY-YIG_UvrC_Cho"/>
</dbReference>
<dbReference type="InterPro" id="IPR003583">
    <property type="entry name" value="Hlx-hairpin-Hlx_DNA-bd_motif"/>
</dbReference>
<dbReference type="InterPro" id="IPR010994">
    <property type="entry name" value="RuvA_2-like"/>
</dbReference>
<dbReference type="InterPro" id="IPR001943">
    <property type="entry name" value="UVR_dom"/>
</dbReference>
<dbReference type="InterPro" id="IPR036876">
    <property type="entry name" value="UVR_dom_sf"/>
</dbReference>
<dbReference type="InterPro" id="IPR050066">
    <property type="entry name" value="UvrABC_protein_C"/>
</dbReference>
<dbReference type="InterPro" id="IPR004791">
    <property type="entry name" value="UvrC"/>
</dbReference>
<dbReference type="InterPro" id="IPR001162">
    <property type="entry name" value="UvrC_RNase_H_dom"/>
</dbReference>
<dbReference type="InterPro" id="IPR038476">
    <property type="entry name" value="UvrC_RNase_H_dom_sf"/>
</dbReference>
<dbReference type="NCBIfam" id="NF001824">
    <property type="entry name" value="PRK00558.1-5"/>
    <property type="match status" value="1"/>
</dbReference>
<dbReference type="NCBIfam" id="TIGR00194">
    <property type="entry name" value="uvrC"/>
    <property type="match status" value="1"/>
</dbReference>
<dbReference type="PANTHER" id="PTHR30562:SF1">
    <property type="entry name" value="UVRABC SYSTEM PROTEIN C"/>
    <property type="match status" value="1"/>
</dbReference>
<dbReference type="PANTHER" id="PTHR30562">
    <property type="entry name" value="UVRC/OXIDOREDUCTASE"/>
    <property type="match status" value="1"/>
</dbReference>
<dbReference type="Pfam" id="PF01541">
    <property type="entry name" value="GIY-YIG"/>
    <property type="match status" value="1"/>
</dbReference>
<dbReference type="Pfam" id="PF12826">
    <property type="entry name" value="HHH_2"/>
    <property type="match status" value="1"/>
</dbReference>
<dbReference type="Pfam" id="PF02151">
    <property type="entry name" value="UVR"/>
    <property type="match status" value="1"/>
</dbReference>
<dbReference type="Pfam" id="PF22920">
    <property type="entry name" value="UvrC_RNaseH"/>
    <property type="match status" value="1"/>
</dbReference>
<dbReference type="Pfam" id="PF08459">
    <property type="entry name" value="UvrC_RNaseH_dom"/>
    <property type="match status" value="1"/>
</dbReference>
<dbReference type="SMART" id="SM00465">
    <property type="entry name" value="GIYc"/>
    <property type="match status" value="1"/>
</dbReference>
<dbReference type="SMART" id="SM00278">
    <property type="entry name" value="HhH1"/>
    <property type="match status" value="2"/>
</dbReference>
<dbReference type="SUPFAM" id="SSF46600">
    <property type="entry name" value="C-terminal UvrC-binding domain of UvrB"/>
    <property type="match status" value="1"/>
</dbReference>
<dbReference type="SUPFAM" id="SSF82771">
    <property type="entry name" value="GIY-YIG endonuclease"/>
    <property type="match status" value="1"/>
</dbReference>
<dbReference type="SUPFAM" id="SSF47781">
    <property type="entry name" value="RuvA domain 2-like"/>
    <property type="match status" value="1"/>
</dbReference>
<dbReference type="PROSITE" id="PS50164">
    <property type="entry name" value="GIY_YIG"/>
    <property type="match status" value="1"/>
</dbReference>
<dbReference type="PROSITE" id="PS50151">
    <property type="entry name" value="UVR"/>
    <property type="match status" value="1"/>
</dbReference>
<dbReference type="PROSITE" id="PS50165">
    <property type="entry name" value="UVRC"/>
    <property type="match status" value="1"/>
</dbReference>
<gene>
    <name evidence="1" type="primary">uvrC</name>
    <name type="ordered locus">RHOS4_26900</name>
    <name type="ORF">RSP_1074</name>
</gene>